<accession>Q5X5S1</accession>
<protein>
    <recommendedName>
        <fullName evidence="1">Probable transcriptional regulatory protein lpp1249</fullName>
    </recommendedName>
</protein>
<organism>
    <name type="scientific">Legionella pneumophila (strain Paris)</name>
    <dbReference type="NCBI Taxonomy" id="297246"/>
    <lineage>
        <taxon>Bacteria</taxon>
        <taxon>Pseudomonadati</taxon>
        <taxon>Pseudomonadota</taxon>
        <taxon>Gammaproteobacteria</taxon>
        <taxon>Legionellales</taxon>
        <taxon>Legionellaceae</taxon>
        <taxon>Legionella</taxon>
    </lineage>
</organism>
<dbReference type="EMBL" id="CR628336">
    <property type="protein sequence ID" value="CAH12400.1"/>
    <property type="molecule type" value="Genomic_DNA"/>
</dbReference>
<dbReference type="RefSeq" id="WP_011213598.1">
    <property type="nucleotide sequence ID" value="NC_006368.1"/>
</dbReference>
<dbReference type="SMR" id="Q5X5S1"/>
<dbReference type="KEGG" id="lpp:lpp1249"/>
<dbReference type="LegioList" id="lpp1249"/>
<dbReference type="HOGENOM" id="CLU_062974_2_2_6"/>
<dbReference type="GO" id="GO:0005829">
    <property type="term" value="C:cytosol"/>
    <property type="evidence" value="ECO:0007669"/>
    <property type="project" value="TreeGrafter"/>
</dbReference>
<dbReference type="GO" id="GO:0003677">
    <property type="term" value="F:DNA binding"/>
    <property type="evidence" value="ECO:0007669"/>
    <property type="project" value="UniProtKB-UniRule"/>
</dbReference>
<dbReference type="GO" id="GO:0006355">
    <property type="term" value="P:regulation of DNA-templated transcription"/>
    <property type="evidence" value="ECO:0007669"/>
    <property type="project" value="UniProtKB-UniRule"/>
</dbReference>
<dbReference type="FunFam" id="1.10.10.200:FF:000002">
    <property type="entry name" value="Probable transcriptional regulatory protein CLM62_37755"/>
    <property type="match status" value="1"/>
</dbReference>
<dbReference type="Gene3D" id="1.10.10.200">
    <property type="match status" value="1"/>
</dbReference>
<dbReference type="Gene3D" id="3.30.70.980">
    <property type="match status" value="2"/>
</dbReference>
<dbReference type="HAMAP" id="MF_00693">
    <property type="entry name" value="Transcrip_reg_TACO1"/>
    <property type="match status" value="1"/>
</dbReference>
<dbReference type="InterPro" id="IPR017856">
    <property type="entry name" value="Integrase-like_N"/>
</dbReference>
<dbReference type="InterPro" id="IPR048300">
    <property type="entry name" value="TACO1_YebC-like_2nd/3rd_dom"/>
</dbReference>
<dbReference type="InterPro" id="IPR049083">
    <property type="entry name" value="TACO1_YebC_N"/>
</dbReference>
<dbReference type="InterPro" id="IPR002876">
    <property type="entry name" value="Transcrip_reg_TACO1-like"/>
</dbReference>
<dbReference type="InterPro" id="IPR026564">
    <property type="entry name" value="Transcrip_reg_TACO1-like_dom3"/>
</dbReference>
<dbReference type="InterPro" id="IPR029072">
    <property type="entry name" value="YebC-like"/>
</dbReference>
<dbReference type="NCBIfam" id="NF001030">
    <property type="entry name" value="PRK00110.1"/>
    <property type="match status" value="1"/>
</dbReference>
<dbReference type="NCBIfam" id="NF009044">
    <property type="entry name" value="PRK12378.1"/>
    <property type="match status" value="1"/>
</dbReference>
<dbReference type="NCBIfam" id="TIGR01033">
    <property type="entry name" value="YebC/PmpR family DNA-binding transcriptional regulator"/>
    <property type="match status" value="1"/>
</dbReference>
<dbReference type="PANTHER" id="PTHR12532:SF6">
    <property type="entry name" value="TRANSCRIPTIONAL REGULATORY PROTEIN YEBC-RELATED"/>
    <property type="match status" value="1"/>
</dbReference>
<dbReference type="PANTHER" id="PTHR12532">
    <property type="entry name" value="TRANSLATIONAL ACTIVATOR OF CYTOCHROME C OXIDASE 1"/>
    <property type="match status" value="1"/>
</dbReference>
<dbReference type="Pfam" id="PF20772">
    <property type="entry name" value="TACO1_YebC_N"/>
    <property type="match status" value="1"/>
</dbReference>
<dbReference type="Pfam" id="PF01709">
    <property type="entry name" value="Transcrip_reg"/>
    <property type="match status" value="1"/>
</dbReference>
<dbReference type="SUPFAM" id="SSF75625">
    <property type="entry name" value="YebC-like"/>
    <property type="match status" value="1"/>
</dbReference>
<name>Y1249_LEGPA</name>
<keyword id="KW-0963">Cytoplasm</keyword>
<keyword id="KW-0238">DNA-binding</keyword>
<keyword id="KW-0804">Transcription</keyword>
<keyword id="KW-0805">Transcription regulation</keyword>
<proteinExistence type="inferred from homology"/>
<comment type="subcellular location">
    <subcellularLocation>
        <location evidence="1">Cytoplasm</location>
    </subcellularLocation>
</comment>
<comment type="similarity">
    <text evidence="1">Belongs to the TACO1 family.</text>
</comment>
<feature type="chain" id="PRO_0000175828" description="Probable transcriptional regulatory protein lpp1249">
    <location>
        <begin position="1"/>
        <end position="247"/>
    </location>
</feature>
<gene>
    <name type="ordered locus">lpp1249</name>
</gene>
<sequence length="247" mass="26828">MAGHSKWANIKFRKGVQDAKRGKIFTKLIREITVAARMGGGDESSNPRLRDAVKKALNANMKRDTIDNAVKRGVGGADGEAMIAMRYEGYGPGGVAILVDCLSDNKNRTVSEVRHAFSKHGGNLGTDGSVSYLFTNQGEILMASNQPEDKVMEIAIDAGASDVAVEDSQIEIITPVEAYHTVLNALQDAGLEVEQSHLTMRAQTLVPISDETAESLIKLIDMLEDLDDVQEVYSNAEFSEKILESMN</sequence>
<reference key="1">
    <citation type="journal article" date="2004" name="Nat. Genet.">
        <title>Evidence in the Legionella pneumophila genome for exploitation of host cell functions and high genome plasticity.</title>
        <authorList>
            <person name="Cazalet C."/>
            <person name="Rusniok C."/>
            <person name="Brueggemann H."/>
            <person name="Zidane N."/>
            <person name="Magnier A."/>
            <person name="Ma L."/>
            <person name="Tichit M."/>
            <person name="Jarraud S."/>
            <person name="Bouchier C."/>
            <person name="Vandenesch F."/>
            <person name="Kunst F."/>
            <person name="Etienne J."/>
            <person name="Glaser P."/>
            <person name="Buchrieser C."/>
        </authorList>
    </citation>
    <scope>NUCLEOTIDE SEQUENCE [LARGE SCALE GENOMIC DNA]</scope>
    <source>
        <strain>Paris</strain>
    </source>
</reference>
<evidence type="ECO:0000255" key="1">
    <source>
        <dbReference type="HAMAP-Rule" id="MF_00693"/>
    </source>
</evidence>